<evidence type="ECO:0000255" key="1">
    <source>
        <dbReference type="HAMAP-Rule" id="MF_00086"/>
    </source>
</evidence>
<protein>
    <recommendedName>
        <fullName evidence="1">S-adenosylmethionine synthase</fullName>
        <shortName evidence="1">AdoMet synthase</shortName>
        <ecNumber evidence="1">2.5.1.6</ecNumber>
    </recommendedName>
    <alternativeName>
        <fullName evidence="1">MAT</fullName>
    </alternativeName>
    <alternativeName>
        <fullName evidence="1">Methionine adenosyltransferase</fullName>
    </alternativeName>
</protein>
<proteinExistence type="inferred from homology"/>
<gene>
    <name evidence="1" type="primary">metK</name>
    <name type="ordered locus">Mnod_5908</name>
</gene>
<feature type="chain" id="PRO_1000196719" description="S-adenosylmethionine synthase">
    <location>
        <begin position="1"/>
        <end position="392"/>
    </location>
</feature>
<feature type="region of interest" description="Flexible loop" evidence="1">
    <location>
        <begin position="102"/>
        <end position="112"/>
    </location>
</feature>
<feature type="binding site" description="in other chain" evidence="1">
    <location>
        <position position="17"/>
    </location>
    <ligand>
        <name>ATP</name>
        <dbReference type="ChEBI" id="CHEBI:30616"/>
        <note>ligand shared between two neighboring subunits</note>
    </ligand>
</feature>
<feature type="binding site" evidence="1">
    <location>
        <position position="19"/>
    </location>
    <ligand>
        <name>Mg(2+)</name>
        <dbReference type="ChEBI" id="CHEBI:18420"/>
    </ligand>
</feature>
<feature type="binding site" evidence="1">
    <location>
        <position position="45"/>
    </location>
    <ligand>
        <name>K(+)</name>
        <dbReference type="ChEBI" id="CHEBI:29103"/>
    </ligand>
</feature>
<feature type="binding site" description="in other chain" evidence="1">
    <location>
        <position position="58"/>
    </location>
    <ligand>
        <name>L-methionine</name>
        <dbReference type="ChEBI" id="CHEBI:57844"/>
        <note>ligand shared between two neighboring subunits</note>
    </ligand>
</feature>
<feature type="binding site" description="in other chain" evidence="1">
    <location>
        <position position="102"/>
    </location>
    <ligand>
        <name>L-methionine</name>
        <dbReference type="ChEBI" id="CHEBI:57844"/>
        <note>ligand shared between two neighboring subunits</note>
    </ligand>
</feature>
<feature type="binding site" description="in other chain" evidence="1">
    <location>
        <begin position="169"/>
        <end position="171"/>
    </location>
    <ligand>
        <name>ATP</name>
        <dbReference type="ChEBI" id="CHEBI:30616"/>
        <note>ligand shared between two neighboring subunits</note>
    </ligand>
</feature>
<feature type="binding site" description="in other chain" evidence="1">
    <location>
        <begin position="235"/>
        <end position="236"/>
    </location>
    <ligand>
        <name>ATP</name>
        <dbReference type="ChEBI" id="CHEBI:30616"/>
        <note>ligand shared between two neighboring subunits</note>
    </ligand>
</feature>
<feature type="binding site" evidence="1">
    <location>
        <position position="244"/>
    </location>
    <ligand>
        <name>ATP</name>
        <dbReference type="ChEBI" id="CHEBI:30616"/>
        <note>ligand shared between two neighboring subunits</note>
    </ligand>
</feature>
<feature type="binding site" evidence="1">
    <location>
        <position position="244"/>
    </location>
    <ligand>
        <name>L-methionine</name>
        <dbReference type="ChEBI" id="CHEBI:57844"/>
        <note>ligand shared between two neighboring subunits</note>
    </ligand>
</feature>
<feature type="binding site" description="in other chain" evidence="1">
    <location>
        <begin position="250"/>
        <end position="251"/>
    </location>
    <ligand>
        <name>ATP</name>
        <dbReference type="ChEBI" id="CHEBI:30616"/>
        <note>ligand shared between two neighboring subunits</note>
    </ligand>
</feature>
<feature type="binding site" evidence="1">
    <location>
        <position position="267"/>
    </location>
    <ligand>
        <name>ATP</name>
        <dbReference type="ChEBI" id="CHEBI:30616"/>
        <note>ligand shared between two neighboring subunits</note>
    </ligand>
</feature>
<feature type="binding site" evidence="1">
    <location>
        <position position="271"/>
    </location>
    <ligand>
        <name>ATP</name>
        <dbReference type="ChEBI" id="CHEBI:30616"/>
        <note>ligand shared between two neighboring subunits</note>
    </ligand>
</feature>
<feature type="binding site" description="in other chain" evidence="1">
    <location>
        <position position="275"/>
    </location>
    <ligand>
        <name>L-methionine</name>
        <dbReference type="ChEBI" id="CHEBI:57844"/>
        <note>ligand shared between two neighboring subunits</note>
    </ligand>
</feature>
<comment type="function">
    <text evidence="1">Catalyzes the formation of S-adenosylmethionine (AdoMet) from methionine and ATP. The overall synthetic reaction is composed of two sequential steps, AdoMet formation and the subsequent tripolyphosphate hydrolysis which occurs prior to release of AdoMet from the enzyme.</text>
</comment>
<comment type="catalytic activity">
    <reaction evidence="1">
        <text>L-methionine + ATP + H2O = S-adenosyl-L-methionine + phosphate + diphosphate</text>
        <dbReference type="Rhea" id="RHEA:21080"/>
        <dbReference type="ChEBI" id="CHEBI:15377"/>
        <dbReference type="ChEBI" id="CHEBI:30616"/>
        <dbReference type="ChEBI" id="CHEBI:33019"/>
        <dbReference type="ChEBI" id="CHEBI:43474"/>
        <dbReference type="ChEBI" id="CHEBI:57844"/>
        <dbReference type="ChEBI" id="CHEBI:59789"/>
        <dbReference type="EC" id="2.5.1.6"/>
    </reaction>
</comment>
<comment type="cofactor">
    <cofactor evidence="1">
        <name>Mg(2+)</name>
        <dbReference type="ChEBI" id="CHEBI:18420"/>
    </cofactor>
    <text evidence="1">Binds 2 divalent ions per subunit.</text>
</comment>
<comment type="cofactor">
    <cofactor evidence="1">
        <name>K(+)</name>
        <dbReference type="ChEBI" id="CHEBI:29103"/>
    </cofactor>
    <text evidence="1">Binds 1 potassium ion per subunit.</text>
</comment>
<comment type="pathway">
    <text evidence="1">Amino-acid biosynthesis; S-adenosyl-L-methionine biosynthesis; S-adenosyl-L-methionine from L-methionine: step 1/1.</text>
</comment>
<comment type="subunit">
    <text evidence="1">Homotetramer; dimer of dimers.</text>
</comment>
<comment type="subcellular location">
    <subcellularLocation>
        <location evidence="1">Cytoplasm</location>
    </subcellularLocation>
</comment>
<comment type="similarity">
    <text evidence="1">Belongs to the AdoMet synthase family.</text>
</comment>
<reference key="1">
    <citation type="submission" date="2009-01" db="EMBL/GenBank/DDBJ databases">
        <title>Complete sequence of chromosome of Methylobacterium nodulans ORS 2060.</title>
        <authorList>
            <consortium name="US DOE Joint Genome Institute"/>
            <person name="Lucas S."/>
            <person name="Copeland A."/>
            <person name="Lapidus A."/>
            <person name="Glavina del Rio T."/>
            <person name="Dalin E."/>
            <person name="Tice H."/>
            <person name="Bruce D."/>
            <person name="Goodwin L."/>
            <person name="Pitluck S."/>
            <person name="Sims D."/>
            <person name="Brettin T."/>
            <person name="Detter J.C."/>
            <person name="Han C."/>
            <person name="Larimer F."/>
            <person name="Land M."/>
            <person name="Hauser L."/>
            <person name="Kyrpides N."/>
            <person name="Ivanova N."/>
            <person name="Marx C.J."/>
            <person name="Richardson P."/>
        </authorList>
    </citation>
    <scope>NUCLEOTIDE SEQUENCE [LARGE SCALE GENOMIC DNA]</scope>
    <source>
        <strain>LMG 21967 / CNCM I-2342 / ORS 2060</strain>
    </source>
</reference>
<organism>
    <name type="scientific">Methylobacterium nodulans (strain LMG 21967 / CNCM I-2342 / ORS 2060)</name>
    <dbReference type="NCBI Taxonomy" id="460265"/>
    <lineage>
        <taxon>Bacteria</taxon>
        <taxon>Pseudomonadati</taxon>
        <taxon>Pseudomonadota</taxon>
        <taxon>Alphaproteobacteria</taxon>
        <taxon>Hyphomicrobiales</taxon>
        <taxon>Methylobacteriaceae</taxon>
        <taxon>Methylobacterium</taxon>
    </lineage>
</organism>
<keyword id="KW-0067">ATP-binding</keyword>
<keyword id="KW-0963">Cytoplasm</keyword>
<keyword id="KW-0460">Magnesium</keyword>
<keyword id="KW-0479">Metal-binding</keyword>
<keyword id="KW-0547">Nucleotide-binding</keyword>
<keyword id="KW-0554">One-carbon metabolism</keyword>
<keyword id="KW-0630">Potassium</keyword>
<keyword id="KW-1185">Reference proteome</keyword>
<keyword id="KW-0808">Transferase</keyword>
<sequence length="392" mass="42069">MARSDYLFTSESVSEGHPDKVCDRISDTVVDAYLAEMPEARLGVETLATTNRIVIAGEVRGPDSVTFQRLEELTRAAIRDIGYEQDGFHWKHADVAIYLHAQSADIAQGVDASGNKDEGAGDQGIMFGYATDETPALMPAPIYYAHKILKDLADARKARIGDAAKLGPDAKSQVTVRYEGGRPVEATQIVLSTQHLDPSLDSAGVRAIVEPYIRAALPKSWVNDRTVWHVNPTGKFVIGGPDGDCGLTGRKIIVDTYGGAAPHGGGAFSGKDPTKVDRSAAYAARYLAKNVVAAGLSRRATIQLAYAIGVSRPLSIYVDLHGTGEVDEGRLEKVLGEILDLSPRGIRTHLGLNKPIYARTSAYGHFGREPDADGGFSWEKTDLVAKLKSALA</sequence>
<dbReference type="EC" id="2.5.1.6" evidence="1"/>
<dbReference type="EMBL" id="CP001349">
    <property type="protein sequence ID" value="ACL60736.1"/>
    <property type="molecule type" value="Genomic_DNA"/>
</dbReference>
<dbReference type="RefSeq" id="WP_015932334.1">
    <property type="nucleotide sequence ID" value="NC_011894.1"/>
</dbReference>
<dbReference type="SMR" id="B8IST7"/>
<dbReference type="STRING" id="460265.Mnod_5908"/>
<dbReference type="KEGG" id="mno:Mnod_5908"/>
<dbReference type="eggNOG" id="COG0192">
    <property type="taxonomic scope" value="Bacteria"/>
</dbReference>
<dbReference type="HOGENOM" id="CLU_041802_1_1_5"/>
<dbReference type="OrthoDB" id="9801686at2"/>
<dbReference type="UniPathway" id="UPA00315">
    <property type="reaction ID" value="UER00080"/>
</dbReference>
<dbReference type="Proteomes" id="UP000008207">
    <property type="component" value="Chromosome"/>
</dbReference>
<dbReference type="GO" id="GO:0005737">
    <property type="term" value="C:cytoplasm"/>
    <property type="evidence" value="ECO:0007669"/>
    <property type="project" value="UniProtKB-SubCell"/>
</dbReference>
<dbReference type="GO" id="GO:0005524">
    <property type="term" value="F:ATP binding"/>
    <property type="evidence" value="ECO:0007669"/>
    <property type="project" value="UniProtKB-UniRule"/>
</dbReference>
<dbReference type="GO" id="GO:0000287">
    <property type="term" value="F:magnesium ion binding"/>
    <property type="evidence" value="ECO:0007669"/>
    <property type="project" value="UniProtKB-UniRule"/>
</dbReference>
<dbReference type="GO" id="GO:0004478">
    <property type="term" value="F:methionine adenosyltransferase activity"/>
    <property type="evidence" value="ECO:0007669"/>
    <property type="project" value="UniProtKB-UniRule"/>
</dbReference>
<dbReference type="GO" id="GO:0006730">
    <property type="term" value="P:one-carbon metabolic process"/>
    <property type="evidence" value="ECO:0007669"/>
    <property type="project" value="UniProtKB-KW"/>
</dbReference>
<dbReference type="GO" id="GO:0006556">
    <property type="term" value="P:S-adenosylmethionine biosynthetic process"/>
    <property type="evidence" value="ECO:0007669"/>
    <property type="project" value="UniProtKB-UniRule"/>
</dbReference>
<dbReference type="CDD" id="cd18079">
    <property type="entry name" value="S-AdoMet_synt"/>
    <property type="match status" value="1"/>
</dbReference>
<dbReference type="Gene3D" id="3.30.300.10">
    <property type="match status" value="3"/>
</dbReference>
<dbReference type="HAMAP" id="MF_00086">
    <property type="entry name" value="S_AdoMet_synth1"/>
    <property type="match status" value="1"/>
</dbReference>
<dbReference type="InterPro" id="IPR022631">
    <property type="entry name" value="ADOMET_SYNTHASE_CS"/>
</dbReference>
<dbReference type="InterPro" id="IPR022630">
    <property type="entry name" value="S-AdoMet_synt_C"/>
</dbReference>
<dbReference type="InterPro" id="IPR022629">
    <property type="entry name" value="S-AdoMet_synt_central"/>
</dbReference>
<dbReference type="InterPro" id="IPR022628">
    <property type="entry name" value="S-AdoMet_synt_N"/>
</dbReference>
<dbReference type="InterPro" id="IPR002133">
    <property type="entry name" value="S-AdoMet_synthetase"/>
</dbReference>
<dbReference type="InterPro" id="IPR022636">
    <property type="entry name" value="S-AdoMet_synthetase_sfam"/>
</dbReference>
<dbReference type="NCBIfam" id="TIGR01034">
    <property type="entry name" value="metK"/>
    <property type="match status" value="1"/>
</dbReference>
<dbReference type="PANTHER" id="PTHR11964">
    <property type="entry name" value="S-ADENOSYLMETHIONINE SYNTHETASE"/>
    <property type="match status" value="1"/>
</dbReference>
<dbReference type="Pfam" id="PF02773">
    <property type="entry name" value="S-AdoMet_synt_C"/>
    <property type="match status" value="1"/>
</dbReference>
<dbReference type="Pfam" id="PF02772">
    <property type="entry name" value="S-AdoMet_synt_M"/>
    <property type="match status" value="1"/>
</dbReference>
<dbReference type="Pfam" id="PF00438">
    <property type="entry name" value="S-AdoMet_synt_N"/>
    <property type="match status" value="1"/>
</dbReference>
<dbReference type="PIRSF" id="PIRSF000497">
    <property type="entry name" value="MAT"/>
    <property type="match status" value="1"/>
</dbReference>
<dbReference type="SUPFAM" id="SSF55973">
    <property type="entry name" value="S-adenosylmethionine synthetase"/>
    <property type="match status" value="3"/>
</dbReference>
<dbReference type="PROSITE" id="PS00376">
    <property type="entry name" value="ADOMET_SYNTHASE_1"/>
    <property type="match status" value="1"/>
</dbReference>
<dbReference type="PROSITE" id="PS00377">
    <property type="entry name" value="ADOMET_SYNTHASE_2"/>
    <property type="match status" value="1"/>
</dbReference>
<name>METK_METNO</name>
<accession>B8IST7</accession>